<accession>Q96GI7</accession>
<keyword id="KW-1267">Proteomics identification</keyword>
<keyword id="KW-1185">Reference proteome</keyword>
<gene>
    <name type="primary">FAM89A</name>
    <name type="synonym">C1orf153</name>
</gene>
<comment type="similarity">
    <text evidence="2">Belongs to the FAM89 family.</text>
</comment>
<sequence length="184" mass="19569">MSGARAAPGAAGNGAVRGLRVDGLPPLPKSLSGLLHSASGGGASGGWRHLERLYAQKSRIQDELSRGGPGGGGARAAALPAKPPNLDAALALLRKEMVGLRQLDMSLLCQLYSLYESIQEYKGACQAASSPDCTYALENGFFDEEEEYFQEQNSLHDRRDRGPPRDLSLPVSSLSSSDWILESI</sequence>
<reference key="1">
    <citation type="journal article" date="2006" name="Nature">
        <title>The DNA sequence and biological annotation of human chromosome 1.</title>
        <authorList>
            <person name="Gregory S.G."/>
            <person name="Barlow K.F."/>
            <person name="McLay K.E."/>
            <person name="Kaul R."/>
            <person name="Swarbreck D."/>
            <person name="Dunham A."/>
            <person name="Scott C.E."/>
            <person name="Howe K.L."/>
            <person name="Woodfine K."/>
            <person name="Spencer C.C.A."/>
            <person name="Jones M.C."/>
            <person name="Gillson C."/>
            <person name="Searle S."/>
            <person name="Zhou Y."/>
            <person name="Kokocinski F."/>
            <person name="McDonald L."/>
            <person name="Evans R."/>
            <person name="Phillips K."/>
            <person name="Atkinson A."/>
            <person name="Cooper R."/>
            <person name="Jones C."/>
            <person name="Hall R.E."/>
            <person name="Andrews T.D."/>
            <person name="Lloyd C."/>
            <person name="Ainscough R."/>
            <person name="Almeida J.P."/>
            <person name="Ambrose K.D."/>
            <person name="Anderson F."/>
            <person name="Andrew R.W."/>
            <person name="Ashwell R.I.S."/>
            <person name="Aubin K."/>
            <person name="Babbage A.K."/>
            <person name="Bagguley C.L."/>
            <person name="Bailey J."/>
            <person name="Beasley H."/>
            <person name="Bethel G."/>
            <person name="Bird C.P."/>
            <person name="Bray-Allen S."/>
            <person name="Brown J.Y."/>
            <person name="Brown A.J."/>
            <person name="Buckley D."/>
            <person name="Burton J."/>
            <person name="Bye J."/>
            <person name="Carder C."/>
            <person name="Chapman J.C."/>
            <person name="Clark S.Y."/>
            <person name="Clarke G."/>
            <person name="Clee C."/>
            <person name="Cobley V."/>
            <person name="Collier R.E."/>
            <person name="Corby N."/>
            <person name="Coville G.J."/>
            <person name="Davies J."/>
            <person name="Deadman R."/>
            <person name="Dunn M."/>
            <person name="Earthrowl M."/>
            <person name="Ellington A.G."/>
            <person name="Errington H."/>
            <person name="Frankish A."/>
            <person name="Frankland J."/>
            <person name="French L."/>
            <person name="Garner P."/>
            <person name="Garnett J."/>
            <person name="Gay L."/>
            <person name="Ghori M.R.J."/>
            <person name="Gibson R."/>
            <person name="Gilby L.M."/>
            <person name="Gillett W."/>
            <person name="Glithero R.J."/>
            <person name="Grafham D.V."/>
            <person name="Griffiths C."/>
            <person name="Griffiths-Jones S."/>
            <person name="Grocock R."/>
            <person name="Hammond S."/>
            <person name="Harrison E.S.I."/>
            <person name="Hart E."/>
            <person name="Haugen E."/>
            <person name="Heath P.D."/>
            <person name="Holmes S."/>
            <person name="Holt K."/>
            <person name="Howden P.J."/>
            <person name="Hunt A.R."/>
            <person name="Hunt S.E."/>
            <person name="Hunter G."/>
            <person name="Isherwood J."/>
            <person name="James R."/>
            <person name="Johnson C."/>
            <person name="Johnson D."/>
            <person name="Joy A."/>
            <person name="Kay M."/>
            <person name="Kershaw J.K."/>
            <person name="Kibukawa M."/>
            <person name="Kimberley A.M."/>
            <person name="King A."/>
            <person name="Knights A.J."/>
            <person name="Lad H."/>
            <person name="Laird G."/>
            <person name="Lawlor S."/>
            <person name="Leongamornlert D.A."/>
            <person name="Lloyd D.M."/>
            <person name="Loveland J."/>
            <person name="Lovell J."/>
            <person name="Lush M.J."/>
            <person name="Lyne R."/>
            <person name="Martin S."/>
            <person name="Mashreghi-Mohammadi M."/>
            <person name="Matthews L."/>
            <person name="Matthews N.S.W."/>
            <person name="McLaren S."/>
            <person name="Milne S."/>
            <person name="Mistry S."/>
            <person name="Moore M.J.F."/>
            <person name="Nickerson T."/>
            <person name="O'Dell C.N."/>
            <person name="Oliver K."/>
            <person name="Palmeiri A."/>
            <person name="Palmer S.A."/>
            <person name="Parker A."/>
            <person name="Patel D."/>
            <person name="Pearce A.V."/>
            <person name="Peck A.I."/>
            <person name="Pelan S."/>
            <person name="Phelps K."/>
            <person name="Phillimore B.J."/>
            <person name="Plumb R."/>
            <person name="Rajan J."/>
            <person name="Raymond C."/>
            <person name="Rouse G."/>
            <person name="Saenphimmachak C."/>
            <person name="Sehra H.K."/>
            <person name="Sheridan E."/>
            <person name="Shownkeen R."/>
            <person name="Sims S."/>
            <person name="Skuce C.D."/>
            <person name="Smith M."/>
            <person name="Steward C."/>
            <person name="Subramanian S."/>
            <person name="Sycamore N."/>
            <person name="Tracey A."/>
            <person name="Tromans A."/>
            <person name="Van Helmond Z."/>
            <person name="Wall M."/>
            <person name="Wallis J.M."/>
            <person name="White S."/>
            <person name="Whitehead S.L."/>
            <person name="Wilkinson J.E."/>
            <person name="Willey D.L."/>
            <person name="Williams H."/>
            <person name="Wilming L."/>
            <person name="Wray P.W."/>
            <person name="Wu Z."/>
            <person name="Coulson A."/>
            <person name="Vaudin M."/>
            <person name="Sulston J.E."/>
            <person name="Durbin R.M."/>
            <person name="Hubbard T."/>
            <person name="Wooster R."/>
            <person name="Dunham I."/>
            <person name="Carter N.P."/>
            <person name="McVean G."/>
            <person name="Ross M.T."/>
            <person name="Harrow J."/>
            <person name="Olson M.V."/>
            <person name="Beck S."/>
            <person name="Rogers J."/>
            <person name="Bentley D.R."/>
        </authorList>
    </citation>
    <scope>NUCLEOTIDE SEQUENCE [LARGE SCALE GENOMIC DNA]</scope>
</reference>
<reference key="2">
    <citation type="journal article" date="2004" name="Genome Res.">
        <title>The status, quality, and expansion of the NIH full-length cDNA project: the Mammalian Gene Collection (MGC).</title>
        <authorList>
            <consortium name="The MGC Project Team"/>
        </authorList>
    </citation>
    <scope>NUCLEOTIDE SEQUENCE [LARGE SCALE MRNA]</scope>
    <source>
        <tissue>Muscle</tissue>
    </source>
</reference>
<reference key="3">
    <citation type="journal article" date="2013" name="J. Proteome Res.">
        <title>Toward a comprehensive characterization of a human cancer cell phosphoproteome.</title>
        <authorList>
            <person name="Zhou H."/>
            <person name="Di Palma S."/>
            <person name="Preisinger C."/>
            <person name="Peng M."/>
            <person name="Polat A.N."/>
            <person name="Heck A.J."/>
            <person name="Mohammed S."/>
        </authorList>
    </citation>
    <scope>IDENTIFICATION BY MASS SPECTROMETRY [LARGE SCALE ANALYSIS]</scope>
    <source>
        <tissue>Erythroleukemia</tissue>
    </source>
</reference>
<reference key="4">
    <citation type="journal article" date="2014" name="J. Proteomics">
        <title>An enzyme assisted RP-RPLC approach for in-depth analysis of human liver phosphoproteome.</title>
        <authorList>
            <person name="Bian Y."/>
            <person name="Song C."/>
            <person name="Cheng K."/>
            <person name="Dong M."/>
            <person name="Wang F."/>
            <person name="Huang J."/>
            <person name="Sun D."/>
            <person name="Wang L."/>
            <person name="Ye M."/>
            <person name="Zou H."/>
        </authorList>
    </citation>
    <scope>IDENTIFICATION BY MASS SPECTROMETRY [LARGE SCALE ANALYSIS]</scope>
    <source>
        <tissue>Liver</tissue>
    </source>
</reference>
<evidence type="ECO:0000256" key="1">
    <source>
        <dbReference type="SAM" id="MobiDB-lite"/>
    </source>
</evidence>
<evidence type="ECO:0000305" key="2"/>
<protein>
    <recommendedName>
        <fullName>Protein FAM89A</fullName>
    </recommendedName>
</protein>
<organism>
    <name type="scientific">Homo sapiens</name>
    <name type="common">Human</name>
    <dbReference type="NCBI Taxonomy" id="9606"/>
    <lineage>
        <taxon>Eukaryota</taxon>
        <taxon>Metazoa</taxon>
        <taxon>Chordata</taxon>
        <taxon>Craniata</taxon>
        <taxon>Vertebrata</taxon>
        <taxon>Euteleostomi</taxon>
        <taxon>Mammalia</taxon>
        <taxon>Eutheria</taxon>
        <taxon>Euarchontoglires</taxon>
        <taxon>Primates</taxon>
        <taxon>Haplorrhini</taxon>
        <taxon>Catarrhini</taxon>
        <taxon>Hominidae</taxon>
        <taxon>Homo</taxon>
    </lineage>
</organism>
<name>FA89A_HUMAN</name>
<proteinExistence type="evidence at protein level"/>
<feature type="chain" id="PRO_0000271761" description="Protein FAM89A">
    <location>
        <begin position="1"/>
        <end position="184"/>
    </location>
</feature>
<feature type="region of interest" description="Disordered" evidence="1">
    <location>
        <begin position="148"/>
        <end position="184"/>
    </location>
</feature>
<feature type="compositionally biased region" description="Basic and acidic residues" evidence="1">
    <location>
        <begin position="154"/>
        <end position="164"/>
    </location>
</feature>
<feature type="compositionally biased region" description="Low complexity" evidence="1">
    <location>
        <begin position="167"/>
        <end position="184"/>
    </location>
</feature>
<dbReference type="EMBL" id="AL732414">
    <property type="status" value="NOT_ANNOTATED_CDS"/>
    <property type="molecule type" value="Genomic_DNA"/>
</dbReference>
<dbReference type="EMBL" id="BC009447">
    <property type="protein sequence ID" value="AAH09447.1"/>
    <property type="molecule type" value="mRNA"/>
</dbReference>
<dbReference type="CCDS" id="CCDS1590.1"/>
<dbReference type="RefSeq" id="NP_940954.1">
    <property type="nucleotide sequence ID" value="NM_198552.3"/>
</dbReference>
<dbReference type="SMR" id="Q96GI7"/>
<dbReference type="BioGRID" id="131954">
    <property type="interactions" value="8"/>
</dbReference>
<dbReference type="FunCoup" id="Q96GI7">
    <property type="interactions" value="17"/>
</dbReference>
<dbReference type="IntAct" id="Q96GI7">
    <property type="interactions" value="4"/>
</dbReference>
<dbReference type="STRING" id="9606.ENSP00000355614"/>
<dbReference type="iPTMnet" id="Q96GI7"/>
<dbReference type="PhosphoSitePlus" id="Q96GI7"/>
<dbReference type="BioMuta" id="FAM89A"/>
<dbReference type="jPOST" id="Q96GI7"/>
<dbReference type="MassIVE" id="Q96GI7"/>
<dbReference type="PaxDb" id="9606-ENSP00000355614"/>
<dbReference type="PeptideAtlas" id="Q96GI7"/>
<dbReference type="ProteomicsDB" id="76636"/>
<dbReference type="Pumba" id="Q96GI7"/>
<dbReference type="Antibodypedia" id="68454">
    <property type="antibodies" value="9 antibodies from 5 providers"/>
</dbReference>
<dbReference type="DNASU" id="375061"/>
<dbReference type="Ensembl" id="ENST00000366654.5">
    <property type="protein sequence ID" value="ENSP00000355614.4"/>
    <property type="gene ID" value="ENSG00000182118.8"/>
</dbReference>
<dbReference type="GeneID" id="375061"/>
<dbReference type="KEGG" id="hsa:375061"/>
<dbReference type="MANE-Select" id="ENST00000366654.5">
    <property type="protein sequence ID" value="ENSP00000355614.4"/>
    <property type="RefSeq nucleotide sequence ID" value="NM_198552.3"/>
    <property type="RefSeq protein sequence ID" value="NP_940954.1"/>
</dbReference>
<dbReference type="UCSC" id="uc001hui.3">
    <property type="organism name" value="human"/>
</dbReference>
<dbReference type="AGR" id="HGNC:25057"/>
<dbReference type="CTD" id="375061"/>
<dbReference type="GeneCards" id="FAM89A"/>
<dbReference type="HGNC" id="HGNC:25057">
    <property type="gene designation" value="FAM89A"/>
</dbReference>
<dbReference type="HPA" id="ENSG00000182118">
    <property type="expression patterns" value="Tissue enhanced (adipose tissue, placenta)"/>
</dbReference>
<dbReference type="neXtProt" id="NX_Q96GI7"/>
<dbReference type="OpenTargets" id="ENSG00000182118"/>
<dbReference type="PharmGKB" id="PA142671794"/>
<dbReference type="VEuPathDB" id="HostDB:ENSG00000182118"/>
<dbReference type="eggNOG" id="ENOG502S28T">
    <property type="taxonomic scope" value="Eukaryota"/>
</dbReference>
<dbReference type="GeneTree" id="ENSGT00940000153370"/>
<dbReference type="HOGENOM" id="CLU_128818_1_1_1"/>
<dbReference type="InParanoid" id="Q96GI7"/>
<dbReference type="OMA" id="MMENGFF"/>
<dbReference type="OrthoDB" id="1681166at2759"/>
<dbReference type="PAN-GO" id="Q96GI7">
    <property type="GO annotations" value="0 GO annotations based on evolutionary models"/>
</dbReference>
<dbReference type="PhylomeDB" id="Q96GI7"/>
<dbReference type="PathwayCommons" id="Q96GI7"/>
<dbReference type="SignaLink" id="Q96GI7"/>
<dbReference type="BioGRID-ORCS" id="375061">
    <property type="hits" value="10 hits in 1159 CRISPR screens"/>
</dbReference>
<dbReference type="ChiTaRS" id="FAM89A">
    <property type="organism name" value="human"/>
</dbReference>
<dbReference type="GenomeRNAi" id="375061"/>
<dbReference type="Pharos" id="Q96GI7">
    <property type="development level" value="Tdark"/>
</dbReference>
<dbReference type="PRO" id="PR:Q96GI7"/>
<dbReference type="Proteomes" id="UP000005640">
    <property type="component" value="Chromosome 1"/>
</dbReference>
<dbReference type="RNAct" id="Q96GI7">
    <property type="molecule type" value="protein"/>
</dbReference>
<dbReference type="Bgee" id="ENSG00000182118">
    <property type="expression patterns" value="Expressed in placenta and 97 other cell types or tissues"/>
</dbReference>
<dbReference type="PANTHER" id="PTHR46949">
    <property type="entry name" value="LEUCINE REPEAT ADAPTER PROTEIN 25"/>
    <property type="match status" value="1"/>
</dbReference>
<dbReference type="PANTHER" id="PTHR46949:SF3">
    <property type="entry name" value="PROTEIN FAM89A"/>
    <property type="match status" value="1"/>
</dbReference>